<keyword id="KW-0028">Amino-acid biosynthesis</keyword>
<keyword id="KW-0100">Branched-chain amino acid biosynthesis</keyword>
<keyword id="KW-0432">Leucine biosynthesis</keyword>
<keyword id="KW-0456">Lyase</keyword>
<keyword id="KW-1185">Reference proteome</keyword>
<feature type="chain" id="PRO_1000063823" description="3-isopropylmalate dehydratase small subunit">
    <location>
        <begin position="1"/>
        <end position="201"/>
    </location>
</feature>
<dbReference type="EC" id="4.2.1.33" evidence="1"/>
<dbReference type="EMBL" id="CP000362">
    <property type="protein sequence ID" value="ABG29955.1"/>
    <property type="molecule type" value="Genomic_DNA"/>
</dbReference>
<dbReference type="RefSeq" id="WP_011566577.1">
    <property type="nucleotide sequence ID" value="NC_008209.1"/>
</dbReference>
<dbReference type="SMR" id="Q16DI8"/>
<dbReference type="STRING" id="375451.RD1_0226"/>
<dbReference type="KEGG" id="rde:RD1_0226"/>
<dbReference type="eggNOG" id="COG0066">
    <property type="taxonomic scope" value="Bacteria"/>
</dbReference>
<dbReference type="HOGENOM" id="CLU_081378_0_3_5"/>
<dbReference type="OrthoDB" id="9777465at2"/>
<dbReference type="UniPathway" id="UPA00048">
    <property type="reaction ID" value="UER00071"/>
</dbReference>
<dbReference type="Proteomes" id="UP000007029">
    <property type="component" value="Chromosome"/>
</dbReference>
<dbReference type="GO" id="GO:0009316">
    <property type="term" value="C:3-isopropylmalate dehydratase complex"/>
    <property type="evidence" value="ECO:0007669"/>
    <property type="project" value="InterPro"/>
</dbReference>
<dbReference type="GO" id="GO:0003861">
    <property type="term" value="F:3-isopropylmalate dehydratase activity"/>
    <property type="evidence" value="ECO:0007669"/>
    <property type="project" value="UniProtKB-UniRule"/>
</dbReference>
<dbReference type="GO" id="GO:0009098">
    <property type="term" value="P:L-leucine biosynthetic process"/>
    <property type="evidence" value="ECO:0007669"/>
    <property type="project" value="UniProtKB-UniRule"/>
</dbReference>
<dbReference type="CDD" id="cd01577">
    <property type="entry name" value="IPMI_Swivel"/>
    <property type="match status" value="1"/>
</dbReference>
<dbReference type="FunFam" id="3.20.19.10:FF:000003">
    <property type="entry name" value="3-isopropylmalate dehydratase small subunit"/>
    <property type="match status" value="1"/>
</dbReference>
<dbReference type="Gene3D" id="3.20.19.10">
    <property type="entry name" value="Aconitase, domain 4"/>
    <property type="match status" value="1"/>
</dbReference>
<dbReference type="HAMAP" id="MF_01031">
    <property type="entry name" value="LeuD_type1"/>
    <property type="match status" value="1"/>
</dbReference>
<dbReference type="InterPro" id="IPR004431">
    <property type="entry name" value="3-IsopropMal_deHydase_ssu"/>
</dbReference>
<dbReference type="InterPro" id="IPR015928">
    <property type="entry name" value="Aconitase/3IPM_dehydase_swvl"/>
</dbReference>
<dbReference type="InterPro" id="IPR000573">
    <property type="entry name" value="AconitaseA/IPMdHydase_ssu_swvl"/>
</dbReference>
<dbReference type="InterPro" id="IPR033940">
    <property type="entry name" value="IPMI_Swivel"/>
</dbReference>
<dbReference type="InterPro" id="IPR050075">
    <property type="entry name" value="LeuD"/>
</dbReference>
<dbReference type="NCBIfam" id="TIGR00171">
    <property type="entry name" value="leuD"/>
    <property type="match status" value="1"/>
</dbReference>
<dbReference type="NCBIfam" id="NF002458">
    <property type="entry name" value="PRK01641.1"/>
    <property type="match status" value="1"/>
</dbReference>
<dbReference type="PANTHER" id="PTHR43345:SF5">
    <property type="entry name" value="3-ISOPROPYLMALATE DEHYDRATASE SMALL SUBUNIT"/>
    <property type="match status" value="1"/>
</dbReference>
<dbReference type="PANTHER" id="PTHR43345">
    <property type="entry name" value="3-ISOPROPYLMALATE DEHYDRATASE SMALL SUBUNIT 2-RELATED-RELATED"/>
    <property type="match status" value="1"/>
</dbReference>
<dbReference type="Pfam" id="PF00694">
    <property type="entry name" value="Aconitase_C"/>
    <property type="match status" value="1"/>
</dbReference>
<dbReference type="SUPFAM" id="SSF52016">
    <property type="entry name" value="LeuD/IlvD-like"/>
    <property type="match status" value="1"/>
</dbReference>
<evidence type="ECO:0000255" key="1">
    <source>
        <dbReference type="HAMAP-Rule" id="MF_01031"/>
    </source>
</evidence>
<reference key="1">
    <citation type="journal article" date="2007" name="J. Bacteriol.">
        <title>The complete genome sequence of Roseobacter denitrificans reveals a mixotrophic rather than photosynthetic metabolism.</title>
        <authorList>
            <person name="Swingley W.D."/>
            <person name="Sadekar S."/>
            <person name="Mastrian S.D."/>
            <person name="Matthies H.J."/>
            <person name="Hao J."/>
            <person name="Ramos H."/>
            <person name="Acharya C.R."/>
            <person name="Conrad A.L."/>
            <person name="Taylor H.L."/>
            <person name="Dejesa L.C."/>
            <person name="Shah M.K."/>
            <person name="O'Huallachain M.E."/>
            <person name="Lince M.T."/>
            <person name="Blankenship R.E."/>
            <person name="Beatty J.T."/>
            <person name="Touchman J.W."/>
        </authorList>
    </citation>
    <scope>NUCLEOTIDE SEQUENCE [LARGE SCALE GENOMIC DNA]</scope>
    <source>
        <strain>ATCC 33942 / OCh 114</strain>
    </source>
</reference>
<sequence>MDKFTTLTGIAAPLPLINVDTDMIIPKQFLKTIKRSGLGVNLFDEMRYDDDGNEIPDFVLNQDAYRKAEIIVAGDNFGCGSSREHAPWAIKDFGIRCVIAPSFADIFYNNCFKNGILPIALPQEQVDVLMKDAEKGANARMTVDLETQTVTTSDGEVFSFDLDPFKKRCLMEGLDDIGLTMEKISAIDSFEQSAAQARPWV</sequence>
<comment type="function">
    <text evidence="1">Catalyzes the isomerization between 2-isopropylmalate and 3-isopropylmalate, via the formation of 2-isopropylmaleate.</text>
</comment>
<comment type="catalytic activity">
    <reaction evidence="1">
        <text>(2R,3S)-3-isopropylmalate = (2S)-2-isopropylmalate</text>
        <dbReference type="Rhea" id="RHEA:32287"/>
        <dbReference type="ChEBI" id="CHEBI:1178"/>
        <dbReference type="ChEBI" id="CHEBI:35121"/>
        <dbReference type="EC" id="4.2.1.33"/>
    </reaction>
</comment>
<comment type="pathway">
    <text evidence="1">Amino-acid biosynthesis; L-leucine biosynthesis; L-leucine from 3-methyl-2-oxobutanoate: step 2/4.</text>
</comment>
<comment type="subunit">
    <text evidence="1">Heterodimer of LeuC and LeuD.</text>
</comment>
<comment type="similarity">
    <text evidence="1">Belongs to the LeuD family. LeuD type 1 subfamily.</text>
</comment>
<proteinExistence type="inferred from homology"/>
<protein>
    <recommendedName>
        <fullName evidence="1">3-isopropylmalate dehydratase small subunit</fullName>
        <ecNumber evidence="1">4.2.1.33</ecNumber>
    </recommendedName>
    <alternativeName>
        <fullName evidence="1">Alpha-IPM isomerase</fullName>
        <shortName evidence="1">IPMI</shortName>
    </alternativeName>
    <alternativeName>
        <fullName evidence="1">Isopropylmalate isomerase</fullName>
    </alternativeName>
</protein>
<name>LEUD_ROSDO</name>
<organism>
    <name type="scientific">Roseobacter denitrificans (strain ATCC 33942 / OCh 114)</name>
    <name type="common">Erythrobacter sp. (strain OCh 114)</name>
    <name type="synonym">Roseobacter denitrificans</name>
    <dbReference type="NCBI Taxonomy" id="375451"/>
    <lineage>
        <taxon>Bacteria</taxon>
        <taxon>Pseudomonadati</taxon>
        <taxon>Pseudomonadota</taxon>
        <taxon>Alphaproteobacteria</taxon>
        <taxon>Rhodobacterales</taxon>
        <taxon>Roseobacteraceae</taxon>
        <taxon>Roseobacter</taxon>
    </lineage>
</organism>
<gene>
    <name evidence="1" type="primary">leuD</name>
    <name type="ordered locus">RD1_0226</name>
</gene>
<accession>Q16DI8</accession>